<feature type="chain" id="PRO_0000134228" description="Small ribosomal subunit protein uS2">
    <location>
        <begin position="1"/>
        <end position="296"/>
    </location>
</feature>
<feature type="region of interest" description="Disordered" evidence="1">
    <location>
        <begin position="252"/>
        <end position="296"/>
    </location>
</feature>
<sequence>MSKISPINIKELLDAGVHFGHKTSRWNPKMASYIYGERDDVHIIDLRQSAALMSVALNAIYETVKKDGKILFVSTKIQASDIIAEYAEKCGQYYVNNRWLGGMLTNWKTIACSIEKLEKLEKTLESEEARICYTKKEILDMSRKKDKLLLSLAGIRNLNSKPDLLVVIDTNKEHIAINEAVKLNIPVVAVVDTNSNPDNVDYPIPGNDDSIRSIRLYCSLFADAALQGLEESMKVSGVDIGTMQDHTDKALTSSKTVSKLKQSKKLSKTQNIDEETNTEFDQALGGACENNNSDNT</sequence>
<comment type="similarity">
    <text evidence="2">Belongs to the universal ribosomal protein uS2 family.</text>
</comment>
<dbReference type="EMBL" id="AJ235270">
    <property type="protein sequence ID" value="CAA14556.1"/>
    <property type="molecule type" value="Genomic_DNA"/>
</dbReference>
<dbReference type="PIR" id="E71717">
    <property type="entry name" value="E71717"/>
</dbReference>
<dbReference type="RefSeq" id="NP_220479.1">
    <property type="nucleotide sequence ID" value="NC_000963.1"/>
</dbReference>
<dbReference type="RefSeq" id="WP_004596525.1">
    <property type="nucleotide sequence ID" value="NC_000963.1"/>
</dbReference>
<dbReference type="SMR" id="Q9ZE61"/>
<dbReference type="STRING" id="272947.gene:17555169"/>
<dbReference type="EnsemblBacteria" id="CAA14556">
    <property type="protein sequence ID" value="CAA14556"/>
    <property type="gene ID" value="CAA14556"/>
</dbReference>
<dbReference type="GeneID" id="57569213"/>
<dbReference type="KEGG" id="rpr:RP086"/>
<dbReference type="PATRIC" id="fig|272947.5.peg.86"/>
<dbReference type="eggNOG" id="COG0052">
    <property type="taxonomic scope" value="Bacteria"/>
</dbReference>
<dbReference type="HOGENOM" id="CLU_040318_2_1_5"/>
<dbReference type="OrthoDB" id="9808036at2"/>
<dbReference type="Proteomes" id="UP000002480">
    <property type="component" value="Chromosome"/>
</dbReference>
<dbReference type="GO" id="GO:0022627">
    <property type="term" value="C:cytosolic small ribosomal subunit"/>
    <property type="evidence" value="ECO:0007669"/>
    <property type="project" value="TreeGrafter"/>
</dbReference>
<dbReference type="GO" id="GO:0003735">
    <property type="term" value="F:structural constituent of ribosome"/>
    <property type="evidence" value="ECO:0007669"/>
    <property type="project" value="InterPro"/>
</dbReference>
<dbReference type="GO" id="GO:0006412">
    <property type="term" value="P:translation"/>
    <property type="evidence" value="ECO:0007669"/>
    <property type="project" value="UniProtKB-UniRule"/>
</dbReference>
<dbReference type="CDD" id="cd01425">
    <property type="entry name" value="RPS2"/>
    <property type="match status" value="1"/>
</dbReference>
<dbReference type="Gene3D" id="3.40.50.10490">
    <property type="entry name" value="Glucose-6-phosphate isomerase like protein, domain 1"/>
    <property type="match status" value="1"/>
</dbReference>
<dbReference type="Gene3D" id="1.10.287.610">
    <property type="entry name" value="Helix hairpin bin"/>
    <property type="match status" value="1"/>
</dbReference>
<dbReference type="HAMAP" id="MF_00291_B">
    <property type="entry name" value="Ribosomal_uS2_B"/>
    <property type="match status" value="1"/>
</dbReference>
<dbReference type="InterPro" id="IPR001865">
    <property type="entry name" value="Ribosomal_uS2"/>
</dbReference>
<dbReference type="InterPro" id="IPR005706">
    <property type="entry name" value="Ribosomal_uS2_bac/mit/plastid"/>
</dbReference>
<dbReference type="InterPro" id="IPR018130">
    <property type="entry name" value="Ribosomal_uS2_CS"/>
</dbReference>
<dbReference type="InterPro" id="IPR023591">
    <property type="entry name" value="Ribosomal_uS2_flav_dom_sf"/>
</dbReference>
<dbReference type="NCBIfam" id="TIGR01011">
    <property type="entry name" value="rpsB_bact"/>
    <property type="match status" value="1"/>
</dbReference>
<dbReference type="PANTHER" id="PTHR12534">
    <property type="entry name" value="30S RIBOSOMAL PROTEIN S2 PROKARYOTIC AND ORGANELLAR"/>
    <property type="match status" value="1"/>
</dbReference>
<dbReference type="PANTHER" id="PTHR12534:SF0">
    <property type="entry name" value="SMALL RIBOSOMAL SUBUNIT PROTEIN US2M"/>
    <property type="match status" value="1"/>
</dbReference>
<dbReference type="Pfam" id="PF00318">
    <property type="entry name" value="Ribosomal_S2"/>
    <property type="match status" value="1"/>
</dbReference>
<dbReference type="PRINTS" id="PR00395">
    <property type="entry name" value="RIBOSOMALS2"/>
</dbReference>
<dbReference type="SUPFAM" id="SSF52313">
    <property type="entry name" value="Ribosomal protein S2"/>
    <property type="match status" value="1"/>
</dbReference>
<dbReference type="PROSITE" id="PS00962">
    <property type="entry name" value="RIBOSOMAL_S2_1"/>
    <property type="match status" value="1"/>
</dbReference>
<dbReference type="PROSITE" id="PS00963">
    <property type="entry name" value="RIBOSOMAL_S2_2"/>
    <property type="match status" value="1"/>
</dbReference>
<accession>Q9ZE61</accession>
<reference key="1">
    <citation type="journal article" date="1998" name="Nature">
        <title>The genome sequence of Rickettsia prowazekii and the origin of mitochondria.</title>
        <authorList>
            <person name="Andersson S.G.E."/>
            <person name="Zomorodipour A."/>
            <person name="Andersson J.O."/>
            <person name="Sicheritz-Ponten T."/>
            <person name="Alsmark U.C.M."/>
            <person name="Podowski R.M."/>
            <person name="Naeslund A.K."/>
            <person name="Eriksson A.-S."/>
            <person name="Winkler H.H."/>
            <person name="Kurland C.G."/>
        </authorList>
    </citation>
    <scope>NUCLEOTIDE SEQUENCE [LARGE SCALE GENOMIC DNA]</scope>
    <source>
        <strain>Madrid E</strain>
    </source>
</reference>
<evidence type="ECO:0000256" key="1">
    <source>
        <dbReference type="SAM" id="MobiDB-lite"/>
    </source>
</evidence>
<evidence type="ECO:0000305" key="2"/>
<proteinExistence type="inferred from homology"/>
<protein>
    <recommendedName>
        <fullName evidence="2">Small ribosomal subunit protein uS2</fullName>
    </recommendedName>
    <alternativeName>
        <fullName>30S ribosomal protein S2</fullName>
    </alternativeName>
</protein>
<keyword id="KW-1185">Reference proteome</keyword>
<keyword id="KW-0687">Ribonucleoprotein</keyword>
<keyword id="KW-0689">Ribosomal protein</keyword>
<name>RS2_RICPR</name>
<gene>
    <name type="primary">rpsB</name>
    <name type="ordered locus">RP086</name>
</gene>
<organism>
    <name type="scientific">Rickettsia prowazekii (strain Madrid E)</name>
    <dbReference type="NCBI Taxonomy" id="272947"/>
    <lineage>
        <taxon>Bacteria</taxon>
        <taxon>Pseudomonadati</taxon>
        <taxon>Pseudomonadota</taxon>
        <taxon>Alphaproteobacteria</taxon>
        <taxon>Rickettsiales</taxon>
        <taxon>Rickettsiaceae</taxon>
        <taxon>Rickettsieae</taxon>
        <taxon>Rickettsia</taxon>
        <taxon>typhus group</taxon>
    </lineage>
</organism>